<protein>
    <recommendedName>
        <fullName evidence="1">Phosphoenolpyruvate carboxykinase (ATP)</fullName>
        <shortName evidence="1">PCK</shortName>
        <shortName evidence="1">PEP carboxykinase</shortName>
        <shortName evidence="1">PEPCK</shortName>
        <ecNumber evidence="1">4.1.1.49</ecNumber>
    </recommendedName>
</protein>
<comment type="function">
    <text evidence="1">Involved in the gluconeogenesis. Catalyzes the conversion of oxaloacetate (OAA) to phosphoenolpyruvate (PEP) through direct phosphoryl transfer between the nucleoside triphosphate and OAA.</text>
</comment>
<comment type="catalytic activity">
    <reaction evidence="1">
        <text>oxaloacetate + ATP = phosphoenolpyruvate + ADP + CO2</text>
        <dbReference type="Rhea" id="RHEA:18617"/>
        <dbReference type="ChEBI" id="CHEBI:16452"/>
        <dbReference type="ChEBI" id="CHEBI:16526"/>
        <dbReference type="ChEBI" id="CHEBI:30616"/>
        <dbReference type="ChEBI" id="CHEBI:58702"/>
        <dbReference type="ChEBI" id="CHEBI:456216"/>
        <dbReference type="EC" id="4.1.1.49"/>
    </reaction>
</comment>
<comment type="cofactor">
    <cofactor evidence="1">
        <name>Mn(2+)</name>
        <dbReference type="ChEBI" id="CHEBI:29035"/>
    </cofactor>
    <text evidence="1">Binds 1 Mn(2+) ion per subunit.</text>
</comment>
<comment type="pathway">
    <text evidence="1">Carbohydrate biosynthesis; gluconeogenesis.</text>
</comment>
<comment type="subcellular location">
    <subcellularLocation>
        <location evidence="1">Cytoplasm</location>
    </subcellularLocation>
</comment>
<comment type="similarity">
    <text evidence="1">Belongs to the phosphoenolpyruvate carboxykinase (ATP) family.</text>
</comment>
<reference key="1">
    <citation type="submission" date="2008-05" db="EMBL/GenBank/DDBJ databases">
        <title>Complete sequence of Rhodopseudomonas palustris TIE-1.</title>
        <authorList>
            <consortium name="US DOE Joint Genome Institute"/>
            <person name="Lucas S."/>
            <person name="Copeland A."/>
            <person name="Lapidus A."/>
            <person name="Glavina del Rio T."/>
            <person name="Dalin E."/>
            <person name="Tice H."/>
            <person name="Pitluck S."/>
            <person name="Chain P."/>
            <person name="Malfatti S."/>
            <person name="Shin M."/>
            <person name="Vergez L."/>
            <person name="Lang D."/>
            <person name="Schmutz J."/>
            <person name="Larimer F."/>
            <person name="Land M."/>
            <person name="Hauser L."/>
            <person name="Kyrpides N."/>
            <person name="Mikhailova N."/>
            <person name="Emerson D."/>
            <person name="Newman D.K."/>
            <person name="Roden E."/>
            <person name="Richardson P."/>
        </authorList>
    </citation>
    <scope>NUCLEOTIDE SEQUENCE [LARGE SCALE GENOMIC DNA]</scope>
    <source>
        <strain>TIE-1</strain>
    </source>
</reference>
<evidence type="ECO:0000255" key="1">
    <source>
        <dbReference type="HAMAP-Rule" id="MF_00453"/>
    </source>
</evidence>
<gene>
    <name evidence="1" type="primary">pckA</name>
    <name type="ordered locus">Rpal_0363</name>
</gene>
<organism>
    <name type="scientific">Rhodopseudomonas palustris (strain TIE-1)</name>
    <dbReference type="NCBI Taxonomy" id="395960"/>
    <lineage>
        <taxon>Bacteria</taxon>
        <taxon>Pseudomonadati</taxon>
        <taxon>Pseudomonadota</taxon>
        <taxon>Alphaproteobacteria</taxon>
        <taxon>Hyphomicrobiales</taxon>
        <taxon>Nitrobacteraceae</taxon>
        <taxon>Rhodopseudomonas</taxon>
    </lineage>
</organism>
<proteinExistence type="inferred from homology"/>
<feature type="chain" id="PRO_1000192322" description="Phosphoenolpyruvate carboxykinase (ATP)">
    <location>
        <begin position="1"/>
        <end position="537"/>
    </location>
</feature>
<feature type="binding site" evidence="1">
    <location>
        <position position="61"/>
    </location>
    <ligand>
        <name>substrate</name>
    </ligand>
</feature>
<feature type="binding site" evidence="1">
    <location>
        <position position="195"/>
    </location>
    <ligand>
        <name>substrate</name>
    </ligand>
</feature>
<feature type="binding site" evidence="1">
    <location>
        <position position="201"/>
    </location>
    <ligand>
        <name>ATP</name>
        <dbReference type="ChEBI" id="CHEBI:30616"/>
    </ligand>
</feature>
<feature type="binding site" evidence="1">
    <location>
        <position position="201"/>
    </location>
    <ligand>
        <name>Mn(2+)</name>
        <dbReference type="ChEBI" id="CHEBI:29035"/>
    </ligand>
</feature>
<feature type="binding site" evidence="1">
    <location>
        <position position="201"/>
    </location>
    <ligand>
        <name>substrate</name>
    </ligand>
</feature>
<feature type="binding site" evidence="1">
    <location>
        <position position="220"/>
    </location>
    <ligand>
        <name>ATP</name>
        <dbReference type="ChEBI" id="CHEBI:30616"/>
    </ligand>
</feature>
<feature type="binding site" evidence="1">
    <location>
        <position position="220"/>
    </location>
    <ligand>
        <name>Mn(2+)</name>
        <dbReference type="ChEBI" id="CHEBI:29035"/>
    </ligand>
</feature>
<feature type="binding site" evidence="1">
    <location>
        <begin position="236"/>
        <end position="244"/>
    </location>
    <ligand>
        <name>ATP</name>
        <dbReference type="ChEBI" id="CHEBI:30616"/>
    </ligand>
</feature>
<feature type="binding site" evidence="1">
    <location>
        <position position="257"/>
    </location>
    <ligand>
        <name>Mn(2+)</name>
        <dbReference type="ChEBI" id="CHEBI:29035"/>
    </ligand>
</feature>
<feature type="binding site" evidence="1">
    <location>
        <position position="285"/>
    </location>
    <ligand>
        <name>ATP</name>
        <dbReference type="ChEBI" id="CHEBI:30616"/>
    </ligand>
</feature>
<feature type="binding site" evidence="1">
    <location>
        <position position="323"/>
    </location>
    <ligand>
        <name>ATP</name>
        <dbReference type="ChEBI" id="CHEBI:30616"/>
    </ligand>
</feature>
<feature type="binding site" evidence="1">
    <location>
        <position position="323"/>
    </location>
    <ligand>
        <name>substrate</name>
    </ligand>
</feature>
<feature type="binding site" evidence="1">
    <location>
        <position position="448"/>
    </location>
    <ligand>
        <name>ATP</name>
        <dbReference type="ChEBI" id="CHEBI:30616"/>
    </ligand>
</feature>
<name>PCKA_RHOPT</name>
<keyword id="KW-0067">ATP-binding</keyword>
<keyword id="KW-0963">Cytoplasm</keyword>
<keyword id="KW-0210">Decarboxylase</keyword>
<keyword id="KW-0312">Gluconeogenesis</keyword>
<keyword id="KW-0456">Lyase</keyword>
<keyword id="KW-0464">Manganese</keyword>
<keyword id="KW-0479">Metal-binding</keyword>
<keyword id="KW-0547">Nucleotide-binding</keyword>
<accession>B3Q999</accession>
<dbReference type="EC" id="4.1.1.49" evidence="1"/>
<dbReference type="EMBL" id="CP001096">
    <property type="protein sequence ID" value="ACE98923.1"/>
    <property type="molecule type" value="Genomic_DNA"/>
</dbReference>
<dbReference type="RefSeq" id="WP_012494091.1">
    <property type="nucleotide sequence ID" value="NC_011004.1"/>
</dbReference>
<dbReference type="SMR" id="B3Q999"/>
<dbReference type="KEGG" id="rpt:Rpal_0363"/>
<dbReference type="HOGENOM" id="CLU_018247_0_1_5"/>
<dbReference type="OrthoDB" id="9806325at2"/>
<dbReference type="UniPathway" id="UPA00138"/>
<dbReference type="Proteomes" id="UP000001725">
    <property type="component" value="Chromosome"/>
</dbReference>
<dbReference type="GO" id="GO:0005829">
    <property type="term" value="C:cytosol"/>
    <property type="evidence" value="ECO:0007669"/>
    <property type="project" value="TreeGrafter"/>
</dbReference>
<dbReference type="GO" id="GO:0005524">
    <property type="term" value="F:ATP binding"/>
    <property type="evidence" value="ECO:0007669"/>
    <property type="project" value="UniProtKB-UniRule"/>
</dbReference>
<dbReference type="GO" id="GO:0046872">
    <property type="term" value="F:metal ion binding"/>
    <property type="evidence" value="ECO:0007669"/>
    <property type="project" value="UniProtKB-KW"/>
</dbReference>
<dbReference type="GO" id="GO:0004612">
    <property type="term" value="F:phosphoenolpyruvate carboxykinase (ATP) activity"/>
    <property type="evidence" value="ECO:0007669"/>
    <property type="project" value="UniProtKB-UniRule"/>
</dbReference>
<dbReference type="GO" id="GO:0006094">
    <property type="term" value="P:gluconeogenesis"/>
    <property type="evidence" value="ECO:0007669"/>
    <property type="project" value="UniProtKB-UniRule"/>
</dbReference>
<dbReference type="CDD" id="cd00484">
    <property type="entry name" value="PEPCK_ATP"/>
    <property type="match status" value="1"/>
</dbReference>
<dbReference type="Gene3D" id="3.90.228.20">
    <property type="match status" value="1"/>
</dbReference>
<dbReference type="Gene3D" id="3.40.449.10">
    <property type="entry name" value="Phosphoenolpyruvate Carboxykinase, domain 1"/>
    <property type="match status" value="1"/>
</dbReference>
<dbReference type="Gene3D" id="2.170.8.10">
    <property type="entry name" value="Phosphoenolpyruvate Carboxykinase, domain 2"/>
    <property type="match status" value="1"/>
</dbReference>
<dbReference type="HAMAP" id="MF_00453">
    <property type="entry name" value="PEPCK_ATP"/>
    <property type="match status" value="1"/>
</dbReference>
<dbReference type="InterPro" id="IPR001272">
    <property type="entry name" value="PEP_carboxykinase_ATP"/>
</dbReference>
<dbReference type="InterPro" id="IPR013035">
    <property type="entry name" value="PEP_carboxykinase_C"/>
</dbReference>
<dbReference type="InterPro" id="IPR008210">
    <property type="entry name" value="PEP_carboxykinase_N"/>
</dbReference>
<dbReference type="InterPro" id="IPR015994">
    <property type="entry name" value="PEPCK_ATP_CS"/>
</dbReference>
<dbReference type="NCBIfam" id="TIGR00224">
    <property type="entry name" value="pckA"/>
    <property type="match status" value="1"/>
</dbReference>
<dbReference type="NCBIfam" id="NF006820">
    <property type="entry name" value="PRK09344.1-2"/>
    <property type="match status" value="1"/>
</dbReference>
<dbReference type="NCBIfam" id="NF006821">
    <property type="entry name" value="PRK09344.1-3"/>
    <property type="match status" value="1"/>
</dbReference>
<dbReference type="NCBIfam" id="NF006822">
    <property type="entry name" value="PRK09344.1-4"/>
    <property type="match status" value="1"/>
</dbReference>
<dbReference type="PANTHER" id="PTHR30031:SF0">
    <property type="entry name" value="PHOSPHOENOLPYRUVATE CARBOXYKINASE (ATP)"/>
    <property type="match status" value="1"/>
</dbReference>
<dbReference type="PANTHER" id="PTHR30031">
    <property type="entry name" value="PHOSPHOENOLPYRUVATE CARBOXYKINASE ATP"/>
    <property type="match status" value="1"/>
</dbReference>
<dbReference type="Pfam" id="PF01293">
    <property type="entry name" value="PEPCK_ATP"/>
    <property type="match status" value="1"/>
</dbReference>
<dbReference type="PIRSF" id="PIRSF006294">
    <property type="entry name" value="PEP_crbxkin"/>
    <property type="match status" value="1"/>
</dbReference>
<dbReference type="SUPFAM" id="SSF68923">
    <property type="entry name" value="PEP carboxykinase N-terminal domain"/>
    <property type="match status" value="1"/>
</dbReference>
<dbReference type="SUPFAM" id="SSF53795">
    <property type="entry name" value="PEP carboxykinase-like"/>
    <property type="match status" value="1"/>
</dbReference>
<dbReference type="PROSITE" id="PS00532">
    <property type="entry name" value="PEPCK_ATP"/>
    <property type="match status" value="1"/>
</dbReference>
<sequence length="537" mass="58758">MQETGVHNGAYGTDKFGLKNLKGVYWNFGAPQLYEHALKNGEAVLSSDGALVADTGVFTGRSPKDKFTVRDATTENTMWWGGNQSITAEQFETLYQDFLKHAEGMTLFAQDLYGGADPTFRIKTRVYTELAWHSLFIRTLLRRPERAELENFVPELTLIDLPSFRADPKRHGCRSENVVAIDFARKIVLIGGTQYAGEMKKSVFTTLNYYLPEKGVLPMHCSANVGPNGDTAIFFGLSGTGKTTLSADPNRTLIGDDEHGWGKDGVFNFEGGCYAKCIKLSAENEPEIYAASTRFGAVLENVVLGEIDRKPDFDDGSKTENTRSAYPLESIPNASLTGRAGQPKNVVMLAADAFGVMPPIAKLTPAQAMYHFLSGYTAKVAGTERGVTEPTPEFSTCFGSPFLPRDPSVYGNMLRELIAKHNVDCWLVNTGWTGGIYGTGHRMPIKVTRALLTAALDGSLRNVEFRTDPYFGFAVPTALPGVPSEILDPVKTWADKAAFDTTARKLVGMFQKNFAKFEAQVDAEVRAAAPDVKMAAE</sequence>